<organism>
    <name type="scientific">Ovis aries</name>
    <name type="common">Sheep</name>
    <dbReference type="NCBI Taxonomy" id="9940"/>
    <lineage>
        <taxon>Eukaryota</taxon>
        <taxon>Metazoa</taxon>
        <taxon>Chordata</taxon>
        <taxon>Craniata</taxon>
        <taxon>Vertebrata</taxon>
        <taxon>Euteleostomi</taxon>
        <taxon>Mammalia</taxon>
        <taxon>Eutheria</taxon>
        <taxon>Laurasiatheria</taxon>
        <taxon>Artiodactyla</taxon>
        <taxon>Ruminantia</taxon>
        <taxon>Pecora</taxon>
        <taxon>Bovidae</taxon>
        <taxon>Caprinae</taxon>
        <taxon>Ovis</taxon>
    </lineage>
</organism>
<accession>P83497</accession>
<evidence type="ECO:0000255" key="1"/>
<evidence type="ECO:0000269" key="2">
    <source>
    </source>
</evidence>
<evidence type="ECO:0000303" key="3">
    <source>
    </source>
</evidence>
<evidence type="ECO:0000305" key="4"/>
<name>PA66E_SHEEP</name>
<comment type="tissue specificity">
    <text>Highly expressed in the placenta between day 60 and day 100 of gestation.</text>
</comment>
<comment type="similarity">
    <text evidence="4">Belongs to the peptidase A1 family.</text>
</comment>
<proteinExistence type="evidence at protein level"/>
<sequence length="15" mass="1772">RDSNVTILPLRNMKD</sequence>
<protein>
    <recommendedName>
        <fullName>Pregnancy-associated glycoprotein 66e</fullName>
        <ecNumber>3.4.23.-</ecNumber>
    </recommendedName>
    <alternativeName>
        <fullName>ovPAG 66e</fullName>
    </alternativeName>
</protein>
<feature type="chain" id="PRO_0000199528" description="Pregnancy-associated glycoprotein 66e">
    <location>
        <begin position="1"/>
        <end position="15" status="greater than"/>
    </location>
</feature>
<feature type="glycosylation site" description="N-linked (GlcNAc...) asparagine" evidence="1">
    <location>
        <position position="4"/>
    </location>
</feature>
<feature type="non-terminal residue" evidence="3">
    <location>
        <position position="15"/>
    </location>
</feature>
<dbReference type="EC" id="3.4.23.-"/>
<dbReference type="Proteomes" id="UP000002356">
    <property type="component" value="Unplaced"/>
</dbReference>
<dbReference type="GO" id="GO:0004190">
    <property type="term" value="F:aspartic-type endopeptidase activity"/>
    <property type="evidence" value="ECO:0007669"/>
    <property type="project" value="UniProtKB-KW"/>
</dbReference>
<dbReference type="GO" id="GO:0006508">
    <property type="term" value="P:proteolysis"/>
    <property type="evidence" value="ECO:0007669"/>
    <property type="project" value="UniProtKB-KW"/>
</dbReference>
<reference evidence="4" key="1">
    <citation type="journal article" date="2004" name="Reprod. Nutr. Dev.">
        <title>Isolation and characterization of eight pregnancy-associated glycoproteins present at high levels in the ovine placenta between day 60 and day 100 of gestation.</title>
        <authorList>
            <person name="El Amiri B."/>
            <person name="Remy B."/>
            <person name="De Sousa N.M."/>
            <person name="Beckers J.F."/>
        </authorList>
    </citation>
    <scope>PROTEIN SEQUENCE</scope>
    <source>
        <tissue evidence="2">Fetal cotyledon</tissue>
    </source>
</reference>
<keyword id="KW-0064">Aspartyl protease</keyword>
<keyword id="KW-0903">Direct protein sequencing</keyword>
<keyword id="KW-0325">Glycoprotein</keyword>
<keyword id="KW-0378">Hydrolase</keyword>
<keyword id="KW-0645">Protease</keyword>
<keyword id="KW-1185">Reference proteome</keyword>